<gene>
    <name type="primary">COX7A1</name>
    <name type="synonym">COX7AH</name>
</gene>
<evidence type="ECO:0000250" key="1">
    <source>
        <dbReference type="UniProtKB" id="P07470"/>
    </source>
</evidence>
<evidence type="ECO:0000250" key="2">
    <source>
        <dbReference type="UniProtKB" id="P10174"/>
    </source>
</evidence>
<evidence type="ECO:0000250" key="3">
    <source>
        <dbReference type="UniProtKB" id="P56392"/>
    </source>
</evidence>
<evidence type="ECO:0000250" key="4">
    <source>
        <dbReference type="UniProtKB" id="Q08CE7"/>
    </source>
</evidence>
<evidence type="ECO:0000305" key="5"/>
<name>CX7A1_CANLF</name>
<accession>Q9TRZ8</accession>
<comment type="function">
    <text evidence="2 3 4">Component of the mitochondrial respiratory complex IV (CIV, also named cytochrome c oxidase complex), the last enzyme in the mitochondrial electron transport chain which drives oxidative phosphorylation (By similarity). The CIV complex is the component of the respiratory chain that catalyzes the reduction of oxygen to water (By similarity). Acts as an assembly factor that specifically drives the homodimerization of CIV complexes, mediating the formation of mitochondrial respiratory supercomplexes (respirasomes) containing two CIV: supercomplxes with two molecules of CIV show improved activity (By similarity). Despite being highly expressed in brown adipose tissue, not required for thermogenesis (By similarity).</text>
</comment>
<comment type="pathway">
    <text evidence="3">Energy metabolism; oxidative phosphorylation.</text>
</comment>
<comment type="subunit">
    <text evidence="1">Component of the complex IV (CIV, cytochrome c oxidase), a multisubunit enzyme composed of 14 subunits. The complex is composed of a catalytic core of 3 subunits MT-CO1, MT-CO2 and MT-CO3, encoded in the mitochondrial DNA, and 11 supernumerary subunits COX4I1 (or COX4I2), COX5A, COX5B, COX6A2 (or COX6A1), COX6B1 (or COX6B2), COX6C, COX7A1 (or COX7A2), COX7B, COX7C, COX8B and NDUFA4, which are encoded in the nuclear genome. The complex exists as a monomer or a dimer and forms supercomplexes (SCs) in the inner mitochondrial membrane with NADH-ubiquinone oxidoreductase (complex I, CI) and ubiquinol-cytochrome c oxidoreductase (cytochrome b-c1 complex, complex III, CIII), resulting in different assemblies (supercomplex SCI(1)III(2)IV(1) and megacomplex MCI(2)III(2)IV(2)).</text>
</comment>
<comment type="subcellular location">
    <subcellularLocation>
        <location evidence="1">Mitochondrion inner membrane</location>
        <topology evidence="1">Single-pass membrane protein</topology>
    </subcellularLocation>
</comment>
<comment type="similarity">
    <text evidence="5">Belongs to the cytochrome c oxidase VIIa family.</text>
</comment>
<reference key="1">
    <citation type="journal article" date="1995" name="Comp. Biochem. Physiol.">
        <title>Species-specific expression of cytochrome c oxidase isozymes.</title>
        <authorList>
            <person name="Linder D."/>
            <person name="Freund R."/>
            <person name="Kadenbach B."/>
        </authorList>
    </citation>
    <scope>PROTEIN SEQUENCE</scope>
    <source>
        <tissue>Brain</tissue>
        <tissue>Heart</tissue>
    </source>
</reference>
<keyword id="KW-0903">Direct protein sequencing</keyword>
<keyword id="KW-0472">Membrane</keyword>
<keyword id="KW-0496">Mitochondrion</keyword>
<keyword id="KW-0999">Mitochondrion inner membrane</keyword>
<keyword id="KW-0560">Oxidoreductase</keyword>
<keyword id="KW-1185">Reference proteome</keyword>
<keyword id="KW-0812">Transmembrane</keyword>
<keyword id="KW-1133">Transmembrane helix</keyword>
<feature type="chain" id="PRO_0000221000" description="Cytochrome c oxidase subunit 7A1, mitochondrial">
    <location>
        <begin position="1"/>
        <end position="23" status="greater than"/>
    </location>
</feature>
<feature type="non-terminal residue">
    <location>
        <position position="23"/>
    </location>
</feature>
<dbReference type="FunCoup" id="Q9TRZ8">
    <property type="interactions" value="4"/>
</dbReference>
<dbReference type="InParanoid" id="Q9TRZ8"/>
<dbReference type="OrthoDB" id="5966508at2759"/>
<dbReference type="UniPathway" id="UPA00705"/>
<dbReference type="Proteomes" id="UP000002254">
    <property type="component" value="Unplaced"/>
</dbReference>
<dbReference type="Proteomes" id="UP000694429">
    <property type="component" value="Unplaced"/>
</dbReference>
<dbReference type="Proteomes" id="UP000694542">
    <property type="component" value="Unplaced"/>
</dbReference>
<dbReference type="Proteomes" id="UP000805418">
    <property type="component" value="Unplaced"/>
</dbReference>
<dbReference type="GO" id="GO:0005743">
    <property type="term" value="C:mitochondrial inner membrane"/>
    <property type="evidence" value="ECO:0007669"/>
    <property type="project" value="UniProtKB-SubCell"/>
</dbReference>
<dbReference type="GO" id="GO:0045277">
    <property type="term" value="C:respiratory chain complex IV"/>
    <property type="evidence" value="ECO:0007669"/>
    <property type="project" value="InterPro"/>
</dbReference>
<dbReference type="GO" id="GO:0016491">
    <property type="term" value="F:oxidoreductase activity"/>
    <property type="evidence" value="ECO:0007669"/>
    <property type="project" value="UniProtKB-KW"/>
</dbReference>
<dbReference type="GO" id="GO:0006123">
    <property type="term" value="P:mitochondrial electron transport, cytochrome c to oxygen"/>
    <property type="evidence" value="ECO:0007669"/>
    <property type="project" value="InterPro"/>
</dbReference>
<dbReference type="GO" id="GO:0097250">
    <property type="term" value="P:mitochondrial respirasome assembly"/>
    <property type="evidence" value="ECO:0000250"/>
    <property type="project" value="UniProtKB"/>
</dbReference>
<dbReference type="Gene3D" id="4.10.91.10">
    <property type="entry name" value="Cytochrome c oxidase, subunit VIIa"/>
    <property type="match status" value="1"/>
</dbReference>
<dbReference type="InterPro" id="IPR039297">
    <property type="entry name" value="COX7a"/>
</dbReference>
<dbReference type="InterPro" id="IPR036539">
    <property type="entry name" value="Cyt_c_oxidase_su7a_sf"/>
</dbReference>
<dbReference type="Pfam" id="PF02238">
    <property type="entry name" value="COX7a"/>
    <property type="match status" value="1"/>
</dbReference>
<dbReference type="SUPFAM" id="SSF81419">
    <property type="entry name" value="Mitochondrial cytochrome c oxidase subunit VIIa"/>
    <property type="match status" value="1"/>
</dbReference>
<protein>
    <recommendedName>
        <fullName>Cytochrome c oxidase subunit 7A1, mitochondrial</fullName>
    </recommendedName>
    <alternativeName>
        <fullName>Cytochrome c oxidase subunit VIIa-heart</fullName>
        <shortName>Cytochrome c oxidase subunit VIIa-H</shortName>
    </alternativeName>
</protein>
<sequence>FENKVAEKQKLFQADNGLPVXLK</sequence>
<organism>
    <name type="scientific">Canis lupus familiaris</name>
    <name type="common">Dog</name>
    <name type="synonym">Canis familiaris</name>
    <dbReference type="NCBI Taxonomy" id="9615"/>
    <lineage>
        <taxon>Eukaryota</taxon>
        <taxon>Metazoa</taxon>
        <taxon>Chordata</taxon>
        <taxon>Craniata</taxon>
        <taxon>Vertebrata</taxon>
        <taxon>Euteleostomi</taxon>
        <taxon>Mammalia</taxon>
        <taxon>Eutheria</taxon>
        <taxon>Laurasiatheria</taxon>
        <taxon>Carnivora</taxon>
        <taxon>Caniformia</taxon>
        <taxon>Canidae</taxon>
        <taxon>Canis</taxon>
    </lineage>
</organism>
<proteinExistence type="evidence at protein level"/>